<gene>
    <name evidence="1" type="primary">der</name>
    <name type="synonym">engA</name>
    <name type="ordered locus">SCO1758</name>
    <name type="ORF">2SCI34.11c</name>
</gene>
<feature type="chain" id="PRO_0000179053" description="GTPase Der">
    <location>
        <begin position="1"/>
        <end position="465"/>
    </location>
</feature>
<feature type="domain" description="EngA-type G 1">
    <location>
        <begin position="27"/>
        <end position="190"/>
    </location>
</feature>
<feature type="domain" description="EngA-type G 2">
    <location>
        <begin position="202"/>
        <end position="375"/>
    </location>
</feature>
<feature type="domain" description="KH-like" evidence="1">
    <location>
        <begin position="376"/>
        <end position="458"/>
    </location>
</feature>
<feature type="binding site" evidence="1">
    <location>
        <begin position="33"/>
        <end position="40"/>
    </location>
    <ligand>
        <name>GTP</name>
        <dbReference type="ChEBI" id="CHEBI:37565"/>
        <label>1</label>
    </ligand>
</feature>
<feature type="binding site" evidence="1">
    <location>
        <begin position="80"/>
        <end position="84"/>
    </location>
    <ligand>
        <name>GTP</name>
        <dbReference type="ChEBI" id="CHEBI:37565"/>
        <label>1</label>
    </ligand>
</feature>
<feature type="binding site" evidence="1">
    <location>
        <begin position="142"/>
        <end position="145"/>
    </location>
    <ligand>
        <name>GTP</name>
        <dbReference type="ChEBI" id="CHEBI:37565"/>
        <label>1</label>
    </ligand>
</feature>
<feature type="binding site" evidence="1">
    <location>
        <begin position="208"/>
        <end position="215"/>
    </location>
    <ligand>
        <name>GTP</name>
        <dbReference type="ChEBI" id="CHEBI:37565"/>
        <label>2</label>
    </ligand>
</feature>
<feature type="binding site" evidence="1">
    <location>
        <begin position="255"/>
        <end position="259"/>
    </location>
    <ligand>
        <name>GTP</name>
        <dbReference type="ChEBI" id="CHEBI:37565"/>
        <label>2</label>
    </ligand>
</feature>
<feature type="binding site" evidence="1">
    <location>
        <begin position="320"/>
        <end position="323"/>
    </location>
    <ligand>
        <name>GTP</name>
        <dbReference type="ChEBI" id="CHEBI:37565"/>
        <label>2</label>
    </ligand>
</feature>
<proteinExistence type="inferred from homology"/>
<name>DER_STRCO</name>
<sequence>MELAAEEGFDIEDVEGAIEEAGHGPLPVLAVVGRPNVGKSTLVNRIIGRREAVVEDKPGVTRDRVTYEAEWAGRRFKVVDTGGWEQDVLGIDASVAAQAEYAIEAADAVVFVVDAKVGATDTDEAVVRLLRKAGKPVVLCANKVDGPSGEADASYLWSLGLGEPQPVSALHGRGTGDMLDRVLEALPEAPAQTFGTAVGGPRRIALIGRPNVGKSSLLNKVAGEDRVVVNELAGTTRDPVDELIELGGVTWKFVDTAGIRKRVHLQQGADYYASLRTAAAVEKAEVAVILVDASESISVQDQRIVTMAVEAGRAIVVAYNKWDTLDEERRYYLEREIETELGQVAWAPRVNVSAQTGRHMEKLVPAIETALAGWETRVPTGRLNAFLGELAAAHPHPVRGGKQPRILFGTQAGTKPPRFVLFASGFIEAGYRRFIERRLREEFGFEGTPIHISVRVREKRGAKKK</sequence>
<organism>
    <name type="scientific">Streptomyces coelicolor (strain ATCC BAA-471 / A3(2) / M145)</name>
    <dbReference type="NCBI Taxonomy" id="100226"/>
    <lineage>
        <taxon>Bacteria</taxon>
        <taxon>Bacillati</taxon>
        <taxon>Actinomycetota</taxon>
        <taxon>Actinomycetes</taxon>
        <taxon>Kitasatosporales</taxon>
        <taxon>Streptomycetaceae</taxon>
        <taxon>Streptomyces</taxon>
        <taxon>Streptomyces albidoflavus group</taxon>
    </lineage>
</organism>
<comment type="function">
    <text evidence="1">GTPase that plays an essential role in the late steps of ribosome biogenesis.</text>
</comment>
<comment type="subunit">
    <text evidence="1">Associates with the 50S ribosomal subunit.</text>
</comment>
<comment type="similarity">
    <text evidence="1">Belongs to the TRAFAC class TrmE-Era-EngA-EngB-Septin-like GTPase superfamily. EngA (Der) GTPase family.</text>
</comment>
<comment type="sequence caution" evidence="2">
    <conflict type="erroneous initiation">
        <sequence resource="EMBL-CDS" id="CAC12931"/>
    </conflict>
    <text>Extended N-terminus.</text>
</comment>
<protein>
    <recommendedName>
        <fullName evidence="1">GTPase Der</fullName>
    </recommendedName>
    <alternativeName>
        <fullName evidence="1">GTP-binding protein EngA</fullName>
    </alternativeName>
</protein>
<keyword id="KW-0342">GTP-binding</keyword>
<keyword id="KW-0547">Nucleotide-binding</keyword>
<keyword id="KW-1185">Reference proteome</keyword>
<keyword id="KW-0677">Repeat</keyword>
<keyword id="KW-0690">Ribosome biogenesis</keyword>
<reference key="1">
    <citation type="journal article" date="2002" name="Nature">
        <title>Complete genome sequence of the model actinomycete Streptomyces coelicolor A3(2).</title>
        <authorList>
            <person name="Bentley S.D."/>
            <person name="Chater K.F."/>
            <person name="Cerdeno-Tarraga A.-M."/>
            <person name="Challis G.L."/>
            <person name="Thomson N.R."/>
            <person name="James K.D."/>
            <person name="Harris D.E."/>
            <person name="Quail M.A."/>
            <person name="Kieser H."/>
            <person name="Harper D."/>
            <person name="Bateman A."/>
            <person name="Brown S."/>
            <person name="Chandra G."/>
            <person name="Chen C.W."/>
            <person name="Collins M."/>
            <person name="Cronin A."/>
            <person name="Fraser A."/>
            <person name="Goble A."/>
            <person name="Hidalgo J."/>
            <person name="Hornsby T."/>
            <person name="Howarth S."/>
            <person name="Huang C.-H."/>
            <person name="Kieser T."/>
            <person name="Larke L."/>
            <person name="Murphy L.D."/>
            <person name="Oliver K."/>
            <person name="O'Neil S."/>
            <person name="Rabbinowitsch E."/>
            <person name="Rajandream M.A."/>
            <person name="Rutherford K.M."/>
            <person name="Rutter S."/>
            <person name="Seeger K."/>
            <person name="Saunders D."/>
            <person name="Sharp S."/>
            <person name="Squares R."/>
            <person name="Squares S."/>
            <person name="Taylor K."/>
            <person name="Warren T."/>
            <person name="Wietzorrek A."/>
            <person name="Woodward J.R."/>
            <person name="Barrell B.G."/>
            <person name="Parkhill J."/>
            <person name="Hopwood D.A."/>
        </authorList>
    </citation>
    <scope>NUCLEOTIDE SEQUENCE [LARGE SCALE GENOMIC DNA]</scope>
    <source>
        <strain>ATCC BAA-471 / A3(2) / M145</strain>
    </source>
</reference>
<accession>Q9EWW8</accession>
<evidence type="ECO:0000255" key="1">
    <source>
        <dbReference type="HAMAP-Rule" id="MF_00195"/>
    </source>
</evidence>
<evidence type="ECO:0000305" key="2"/>
<dbReference type="EMBL" id="AL939110">
    <property type="protein sequence ID" value="CAC12931.1"/>
    <property type="status" value="ALT_INIT"/>
    <property type="molecule type" value="Genomic_DNA"/>
</dbReference>
<dbReference type="RefSeq" id="NP_626030.1">
    <property type="nucleotide sequence ID" value="NC_003888.3"/>
</dbReference>
<dbReference type="SMR" id="Q9EWW8"/>
<dbReference type="FunCoup" id="Q9EWW8">
    <property type="interactions" value="161"/>
</dbReference>
<dbReference type="STRING" id="100226.gene:17759352"/>
<dbReference type="PaxDb" id="100226-SCO1758"/>
<dbReference type="KEGG" id="sco:SCO1758"/>
<dbReference type="PATRIC" id="fig|100226.15.peg.1776"/>
<dbReference type="eggNOG" id="COG1160">
    <property type="taxonomic scope" value="Bacteria"/>
</dbReference>
<dbReference type="HOGENOM" id="CLU_016077_6_2_11"/>
<dbReference type="InParanoid" id="Q9EWW8"/>
<dbReference type="OrthoDB" id="9805918at2"/>
<dbReference type="PhylomeDB" id="Q9EWW8"/>
<dbReference type="Proteomes" id="UP000001973">
    <property type="component" value="Chromosome"/>
</dbReference>
<dbReference type="GO" id="GO:0016887">
    <property type="term" value="F:ATP hydrolysis activity"/>
    <property type="evidence" value="ECO:0007669"/>
    <property type="project" value="InterPro"/>
</dbReference>
<dbReference type="GO" id="GO:0005525">
    <property type="term" value="F:GTP binding"/>
    <property type="evidence" value="ECO:0007669"/>
    <property type="project" value="UniProtKB-UniRule"/>
</dbReference>
<dbReference type="GO" id="GO:0043022">
    <property type="term" value="F:ribosome binding"/>
    <property type="evidence" value="ECO:0000318"/>
    <property type="project" value="GO_Central"/>
</dbReference>
<dbReference type="GO" id="GO:0042254">
    <property type="term" value="P:ribosome biogenesis"/>
    <property type="evidence" value="ECO:0007669"/>
    <property type="project" value="UniProtKB-KW"/>
</dbReference>
<dbReference type="CDD" id="cd01894">
    <property type="entry name" value="EngA1"/>
    <property type="match status" value="1"/>
</dbReference>
<dbReference type="CDD" id="cd01895">
    <property type="entry name" value="EngA2"/>
    <property type="match status" value="1"/>
</dbReference>
<dbReference type="FunFam" id="3.30.300.20:FF:000004">
    <property type="entry name" value="GTPase Der"/>
    <property type="match status" value="1"/>
</dbReference>
<dbReference type="FunFam" id="3.40.50.300:FF:000040">
    <property type="entry name" value="GTPase Der"/>
    <property type="match status" value="1"/>
</dbReference>
<dbReference type="FunFam" id="3.40.50.300:FF:000057">
    <property type="entry name" value="GTPase Der"/>
    <property type="match status" value="1"/>
</dbReference>
<dbReference type="Gene3D" id="3.30.300.20">
    <property type="match status" value="1"/>
</dbReference>
<dbReference type="Gene3D" id="3.40.50.300">
    <property type="entry name" value="P-loop containing nucleotide triphosphate hydrolases"/>
    <property type="match status" value="2"/>
</dbReference>
<dbReference type="HAMAP" id="MF_00195">
    <property type="entry name" value="GTPase_Der"/>
    <property type="match status" value="1"/>
</dbReference>
<dbReference type="InterPro" id="IPR003593">
    <property type="entry name" value="AAA+_ATPase"/>
</dbReference>
<dbReference type="InterPro" id="IPR031166">
    <property type="entry name" value="G_ENGA"/>
</dbReference>
<dbReference type="InterPro" id="IPR006073">
    <property type="entry name" value="GTP-bd"/>
</dbReference>
<dbReference type="InterPro" id="IPR016484">
    <property type="entry name" value="GTPase_Der"/>
</dbReference>
<dbReference type="InterPro" id="IPR032859">
    <property type="entry name" value="KH_dom-like"/>
</dbReference>
<dbReference type="InterPro" id="IPR015946">
    <property type="entry name" value="KH_dom-like_a/b"/>
</dbReference>
<dbReference type="InterPro" id="IPR027417">
    <property type="entry name" value="P-loop_NTPase"/>
</dbReference>
<dbReference type="InterPro" id="IPR005225">
    <property type="entry name" value="Small_GTP-bd"/>
</dbReference>
<dbReference type="NCBIfam" id="TIGR03594">
    <property type="entry name" value="GTPase_EngA"/>
    <property type="match status" value="1"/>
</dbReference>
<dbReference type="NCBIfam" id="NF002828">
    <property type="entry name" value="PRK03003.1"/>
    <property type="match status" value="1"/>
</dbReference>
<dbReference type="NCBIfam" id="TIGR00231">
    <property type="entry name" value="small_GTP"/>
    <property type="match status" value="2"/>
</dbReference>
<dbReference type="PANTHER" id="PTHR43834">
    <property type="entry name" value="GTPASE DER"/>
    <property type="match status" value="1"/>
</dbReference>
<dbReference type="PANTHER" id="PTHR43834:SF6">
    <property type="entry name" value="GTPASE DER"/>
    <property type="match status" value="1"/>
</dbReference>
<dbReference type="Pfam" id="PF14714">
    <property type="entry name" value="KH_dom-like"/>
    <property type="match status" value="1"/>
</dbReference>
<dbReference type="Pfam" id="PF01926">
    <property type="entry name" value="MMR_HSR1"/>
    <property type="match status" value="2"/>
</dbReference>
<dbReference type="PIRSF" id="PIRSF006485">
    <property type="entry name" value="GTP-binding_EngA"/>
    <property type="match status" value="1"/>
</dbReference>
<dbReference type="PRINTS" id="PR00326">
    <property type="entry name" value="GTP1OBG"/>
</dbReference>
<dbReference type="SMART" id="SM00382">
    <property type="entry name" value="AAA"/>
    <property type="match status" value="2"/>
</dbReference>
<dbReference type="SUPFAM" id="SSF52540">
    <property type="entry name" value="P-loop containing nucleoside triphosphate hydrolases"/>
    <property type="match status" value="2"/>
</dbReference>
<dbReference type="PROSITE" id="PS51712">
    <property type="entry name" value="G_ENGA"/>
    <property type="match status" value="2"/>
</dbReference>